<dbReference type="EMBL" id="BA000016">
    <property type="protein sequence ID" value="BAB81510.1"/>
    <property type="molecule type" value="Genomic_DNA"/>
</dbReference>
<dbReference type="EMBL" id="X86496">
    <property type="protein sequence ID" value="CAA60218.1"/>
    <property type="molecule type" value="Genomic_DNA"/>
</dbReference>
<dbReference type="RefSeq" id="WP_003451108.1">
    <property type="nucleotide sequence ID" value="NC_003366.1"/>
</dbReference>
<dbReference type="SMR" id="Q46206"/>
<dbReference type="STRING" id="195102.gene:10491068"/>
<dbReference type="GeneID" id="93001660"/>
<dbReference type="KEGG" id="cpe:CPE1804"/>
<dbReference type="HOGENOM" id="CLU_045647_5_3_9"/>
<dbReference type="Proteomes" id="UP000000818">
    <property type="component" value="Chromosome"/>
</dbReference>
<dbReference type="GO" id="GO:0005737">
    <property type="term" value="C:cytoplasm"/>
    <property type="evidence" value="ECO:0007669"/>
    <property type="project" value="UniProtKB-SubCell"/>
</dbReference>
<dbReference type="GO" id="GO:0051301">
    <property type="term" value="P:cell division"/>
    <property type="evidence" value="ECO:0007669"/>
    <property type="project" value="UniProtKB-KW"/>
</dbReference>
<dbReference type="GO" id="GO:0051304">
    <property type="term" value="P:chromosome separation"/>
    <property type="evidence" value="ECO:0007669"/>
    <property type="project" value="InterPro"/>
</dbReference>
<dbReference type="GO" id="GO:0006260">
    <property type="term" value="P:DNA replication"/>
    <property type="evidence" value="ECO:0007669"/>
    <property type="project" value="UniProtKB-UniRule"/>
</dbReference>
<dbReference type="Gene3D" id="1.10.10.10">
    <property type="entry name" value="Winged helix-like DNA-binding domain superfamily/Winged helix DNA-binding domain"/>
    <property type="match status" value="2"/>
</dbReference>
<dbReference type="HAMAP" id="MF_01804">
    <property type="entry name" value="ScpB"/>
    <property type="match status" value="1"/>
</dbReference>
<dbReference type="InterPro" id="IPR005234">
    <property type="entry name" value="ScpB_csome_segregation"/>
</dbReference>
<dbReference type="InterPro" id="IPR036388">
    <property type="entry name" value="WH-like_DNA-bd_sf"/>
</dbReference>
<dbReference type="InterPro" id="IPR036390">
    <property type="entry name" value="WH_DNA-bd_sf"/>
</dbReference>
<dbReference type="NCBIfam" id="TIGR00281">
    <property type="entry name" value="SMC-Scp complex subunit ScpB"/>
    <property type="match status" value="1"/>
</dbReference>
<dbReference type="PANTHER" id="PTHR34298">
    <property type="entry name" value="SEGREGATION AND CONDENSATION PROTEIN B"/>
    <property type="match status" value="1"/>
</dbReference>
<dbReference type="PANTHER" id="PTHR34298:SF2">
    <property type="entry name" value="SEGREGATION AND CONDENSATION PROTEIN B"/>
    <property type="match status" value="1"/>
</dbReference>
<dbReference type="Pfam" id="PF04079">
    <property type="entry name" value="SMC_ScpB"/>
    <property type="match status" value="1"/>
</dbReference>
<dbReference type="PIRSF" id="PIRSF019345">
    <property type="entry name" value="ScpB"/>
    <property type="match status" value="1"/>
</dbReference>
<dbReference type="SUPFAM" id="SSF46785">
    <property type="entry name" value="Winged helix' DNA-binding domain"/>
    <property type="match status" value="2"/>
</dbReference>
<organism>
    <name type="scientific">Clostridium perfringens (strain 13 / Type A)</name>
    <dbReference type="NCBI Taxonomy" id="195102"/>
    <lineage>
        <taxon>Bacteria</taxon>
        <taxon>Bacillati</taxon>
        <taxon>Bacillota</taxon>
        <taxon>Clostridia</taxon>
        <taxon>Eubacteriales</taxon>
        <taxon>Clostridiaceae</taxon>
        <taxon>Clostridium</taxon>
    </lineage>
</organism>
<comment type="function">
    <text evidence="1">Participates in chromosomal partition during cell division. May act via the formation of a condensin-like complex containing Smc and ScpA that pull DNA away from mid-cell into both cell halves.</text>
</comment>
<comment type="subunit">
    <text evidence="1">Homodimer. Homodimerization may be required to stabilize the binding of ScpA to the Smc head domains. Component of a cohesin-like complex composed of ScpA, ScpB and the Smc homodimer, in which ScpA and ScpB bind to the head domain of Smc. The presence of the three proteins is required for the association of the complex with DNA.</text>
</comment>
<comment type="subcellular location">
    <subcellularLocation>
        <location evidence="1">Cytoplasm</location>
    </subcellularLocation>
    <text evidence="1">Associated with two foci at the outer edges of the nucleoid region in young cells, and at four foci within both cell halves in older cells.</text>
</comment>
<comment type="similarity">
    <text evidence="1">Belongs to the ScpB family.</text>
</comment>
<feature type="chain" id="PRO_0000211129" description="Segregation and condensation protein B">
    <location>
        <begin position="1"/>
        <end position="195"/>
    </location>
</feature>
<feature type="sequence conflict" description="In Ref. 2; CAA60218." evidence="2" ref="2">
    <original>E</original>
    <variation>P</variation>
    <location>
        <position position="87"/>
    </location>
</feature>
<feature type="sequence conflict" description="In Ref. 2; CAA60218." evidence="2" ref="2">
    <original>N</original>
    <variation>I</variation>
    <location>
        <position position="142"/>
    </location>
</feature>
<evidence type="ECO:0000255" key="1">
    <source>
        <dbReference type="HAMAP-Rule" id="MF_01804"/>
    </source>
</evidence>
<evidence type="ECO:0000305" key="2"/>
<protein>
    <recommendedName>
        <fullName evidence="1">Segregation and condensation protein B</fullName>
    </recommendedName>
</protein>
<name>SCPB_CLOPE</name>
<gene>
    <name evidence="1" type="primary">scpB</name>
    <name type="synonym">hypB</name>
    <name type="ordered locus">CPE1804</name>
</gene>
<proteinExistence type="inferred from homology"/>
<accession>Q46206</accession>
<accession>Q8XJF5</accession>
<reference key="1">
    <citation type="journal article" date="2002" name="Proc. Natl. Acad. Sci. U.S.A.">
        <title>Complete genome sequence of Clostridium perfringens, an anaerobic flesh-eater.</title>
        <authorList>
            <person name="Shimizu T."/>
            <person name="Ohtani K."/>
            <person name="Hirakawa H."/>
            <person name="Ohshima K."/>
            <person name="Yamashita A."/>
            <person name="Shiba T."/>
            <person name="Ogasawara N."/>
            <person name="Hattori M."/>
            <person name="Kuhara S."/>
            <person name="Hayashi H."/>
        </authorList>
    </citation>
    <scope>NUCLEOTIDE SEQUENCE [LARGE SCALE GENOMIC DNA]</scope>
    <source>
        <strain>13 / Type A</strain>
    </source>
</reference>
<reference key="2">
    <citation type="journal article" date="1995" name="J. Bacteriol.">
        <title>Rapid expansion of the physical and genetic map of the chromosome of Clostridium perfringens CPN50.</title>
        <authorList>
            <person name="Katayama S."/>
            <person name="Dupuy B."/>
            <person name="Garnier T."/>
            <person name="Cole S.T."/>
        </authorList>
    </citation>
    <scope>NUCLEOTIDE SEQUENCE [GENOMIC DNA] OF 87-142</scope>
    <source>
        <strain>CPN50</strain>
    </source>
</reference>
<sequence>MSDINQIEFSEISKKDELKSIIESLLFVSGEPLALKDICRIVEEDFKYVEDLMRELMNIYNGDSSRGIKIISLNGTYQLVTKTKNSEYVQKLLKKNVRQSLSQASLESLAIICYKQPITRVEIDEIRGVKSESAIQRLVEKNLVEETGRLEVPGRPILYGTTDEFLRHFALNDLGDLPSIELFEENDEVSDMVEE</sequence>
<keyword id="KW-0131">Cell cycle</keyword>
<keyword id="KW-0132">Cell division</keyword>
<keyword id="KW-0159">Chromosome partition</keyword>
<keyword id="KW-0963">Cytoplasm</keyword>
<keyword id="KW-1185">Reference proteome</keyword>